<proteinExistence type="inferred from homology"/>
<gene>
    <name evidence="1" type="primary">lldD</name>
    <name type="ordered locus">SeSA_A3895</name>
</gene>
<name>LLDD_SALSV</name>
<dbReference type="EC" id="1.1.-.-" evidence="1"/>
<dbReference type="EMBL" id="CP001127">
    <property type="protein sequence ID" value="ACF89046.1"/>
    <property type="molecule type" value="Genomic_DNA"/>
</dbReference>
<dbReference type="RefSeq" id="WP_000587001.1">
    <property type="nucleotide sequence ID" value="NC_011094.1"/>
</dbReference>
<dbReference type="SMR" id="B4TZU7"/>
<dbReference type="KEGG" id="sew:SeSA_A3895"/>
<dbReference type="HOGENOM" id="CLU_020639_0_0_6"/>
<dbReference type="Proteomes" id="UP000001865">
    <property type="component" value="Chromosome"/>
</dbReference>
<dbReference type="GO" id="GO:0005886">
    <property type="term" value="C:plasma membrane"/>
    <property type="evidence" value="ECO:0007669"/>
    <property type="project" value="UniProtKB-SubCell"/>
</dbReference>
<dbReference type="GO" id="GO:0010181">
    <property type="term" value="F:FMN binding"/>
    <property type="evidence" value="ECO:0007669"/>
    <property type="project" value="InterPro"/>
</dbReference>
<dbReference type="GO" id="GO:0004459">
    <property type="term" value="F:L-lactate dehydrogenase activity"/>
    <property type="evidence" value="ECO:0007669"/>
    <property type="project" value="UniProtKB-UniRule"/>
</dbReference>
<dbReference type="GO" id="GO:0009060">
    <property type="term" value="P:aerobic respiration"/>
    <property type="evidence" value="ECO:0007669"/>
    <property type="project" value="TreeGrafter"/>
</dbReference>
<dbReference type="GO" id="GO:0006089">
    <property type="term" value="P:lactate metabolic process"/>
    <property type="evidence" value="ECO:0007669"/>
    <property type="project" value="UniProtKB-UniRule"/>
</dbReference>
<dbReference type="CDD" id="cd02809">
    <property type="entry name" value="alpha_hydroxyacid_oxid_FMN"/>
    <property type="match status" value="1"/>
</dbReference>
<dbReference type="FunFam" id="3.20.20.70:FF:000029">
    <property type="entry name" value="L-lactate dehydrogenase"/>
    <property type="match status" value="1"/>
</dbReference>
<dbReference type="Gene3D" id="3.20.20.70">
    <property type="entry name" value="Aldolase class I"/>
    <property type="match status" value="1"/>
</dbReference>
<dbReference type="HAMAP" id="MF_01559">
    <property type="entry name" value="L_lact_dehydr"/>
    <property type="match status" value="1"/>
</dbReference>
<dbReference type="InterPro" id="IPR013785">
    <property type="entry name" value="Aldolase_TIM"/>
</dbReference>
<dbReference type="InterPro" id="IPR012133">
    <property type="entry name" value="Alpha-hydoxy_acid_DH_FMN"/>
</dbReference>
<dbReference type="InterPro" id="IPR000262">
    <property type="entry name" value="FMN-dep_DH"/>
</dbReference>
<dbReference type="InterPro" id="IPR037396">
    <property type="entry name" value="FMN_HAD"/>
</dbReference>
<dbReference type="InterPro" id="IPR008259">
    <property type="entry name" value="FMN_hydac_DH_AS"/>
</dbReference>
<dbReference type="InterPro" id="IPR020920">
    <property type="entry name" value="LldD"/>
</dbReference>
<dbReference type="NCBIfam" id="NF033901">
    <property type="entry name" value="L_lactate_LldD"/>
    <property type="match status" value="1"/>
</dbReference>
<dbReference type="NCBIfam" id="NF008398">
    <property type="entry name" value="PRK11197.1"/>
    <property type="match status" value="1"/>
</dbReference>
<dbReference type="PANTHER" id="PTHR10578:SF85">
    <property type="entry name" value="L-LACTATE DEHYDROGENASE"/>
    <property type="match status" value="1"/>
</dbReference>
<dbReference type="PANTHER" id="PTHR10578">
    <property type="entry name" value="S -2-HYDROXY-ACID OXIDASE-RELATED"/>
    <property type="match status" value="1"/>
</dbReference>
<dbReference type="Pfam" id="PF01070">
    <property type="entry name" value="FMN_dh"/>
    <property type="match status" value="1"/>
</dbReference>
<dbReference type="PIRSF" id="PIRSF000138">
    <property type="entry name" value="Al-hdrx_acd_dh"/>
    <property type="match status" value="1"/>
</dbReference>
<dbReference type="SUPFAM" id="SSF51395">
    <property type="entry name" value="FMN-linked oxidoreductases"/>
    <property type="match status" value="1"/>
</dbReference>
<dbReference type="PROSITE" id="PS00557">
    <property type="entry name" value="FMN_HYDROXY_ACID_DH_1"/>
    <property type="match status" value="1"/>
</dbReference>
<dbReference type="PROSITE" id="PS51349">
    <property type="entry name" value="FMN_HYDROXY_ACID_DH_2"/>
    <property type="match status" value="1"/>
</dbReference>
<accession>B4TZU7</accession>
<keyword id="KW-0997">Cell inner membrane</keyword>
<keyword id="KW-1003">Cell membrane</keyword>
<keyword id="KW-0285">Flavoprotein</keyword>
<keyword id="KW-0288">FMN</keyword>
<keyword id="KW-0472">Membrane</keyword>
<keyword id="KW-0560">Oxidoreductase</keyword>
<comment type="function">
    <text evidence="1">Catalyzes the conversion of L-lactate to pyruvate. Is coupled to the respiratory chain.</text>
</comment>
<comment type="catalytic activity">
    <reaction evidence="1">
        <text>(S)-lactate + A = pyruvate + AH2</text>
        <dbReference type="Rhea" id="RHEA:45816"/>
        <dbReference type="ChEBI" id="CHEBI:13193"/>
        <dbReference type="ChEBI" id="CHEBI:15361"/>
        <dbReference type="ChEBI" id="CHEBI:16651"/>
        <dbReference type="ChEBI" id="CHEBI:17499"/>
    </reaction>
</comment>
<comment type="cofactor">
    <cofactor evidence="1">
        <name>FMN</name>
        <dbReference type="ChEBI" id="CHEBI:58210"/>
    </cofactor>
</comment>
<comment type="subcellular location">
    <subcellularLocation>
        <location evidence="1">Cell inner membrane</location>
        <topology evidence="1">Peripheral membrane protein</topology>
    </subcellularLocation>
</comment>
<comment type="similarity">
    <text evidence="1">Belongs to the FMN-dependent alpha-hydroxy acid dehydrogenase family.</text>
</comment>
<feature type="chain" id="PRO_0000383447" description="L-lactate dehydrogenase">
    <location>
        <begin position="1"/>
        <end position="396"/>
    </location>
</feature>
<feature type="domain" description="FMN hydroxy acid dehydrogenase" evidence="1">
    <location>
        <begin position="1"/>
        <end position="380"/>
    </location>
</feature>
<feature type="active site" description="Proton acceptor" evidence="1">
    <location>
        <position position="275"/>
    </location>
</feature>
<feature type="binding site" evidence="1">
    <location>
        <position position="24"/>
    </location>
    <ligand>
        <name>substrate</name>
    </ligand>
</feature>
<feature type="binding site" evidence="1">
    <location>
        <position position="106"/>
    </location>
    <ligand>
        <name>FMN</name>
        <dbReference type="ChEBI" id="CHEBI:58210"/>
    </ligand>
</feature>
<feature type="binding site" evidence="1">
    <location>
        <position position="127"/>
    </location>
    <ligand>
        <name>FMN</name>
        <dbReference type="ChEBI" id="CHEBI:58210"/>
    </ligand>
</feature>
<feature type="binding site" evidence="1">
    <location>
        <position position="129"/>
    </location>
    <ligand>
        <name>substrate</name>
    </ligand>
</feature>
<feature type="binding site" evidence="1">
    <location>
        <position position="155"/>
    </location>
    <ligand>
        <name>FMN</name>
        <dbReference type="ChEBI" id="CHEBI:58210"/>
    </ligand>
</feature>
<feature type="binding site" evidence="1">
    <location>
        <position position="164"/>
    </location>
    <ligand>
        <name>substrate</name>
    </ligand>
</feature>
<feature type="binding site" evidence="1">
    <location>
        <position position="251"/>
    </location>
    <ligand>
        <name>FMN</name>
        <dbReference type="ChEBI" id="CHEBI:58210"/>
    </ligand>
</feature>
<feature type="binding site" evidence="1">
    <location>
        <position position="278"/>
    </location>
    <ligand>
        <name>substrate</name>
    </ligand>
</feature>
<feature type="binding site" evidence="1">
    <location>
        <begin position="306"/>
        <end position="330"/>
    </location>
    <ligand>
        <name>FMN</name>
        <dbReference type="ChEBI" id="CHEBI:58210"/>
    </ligand>
</feature>
<organism>
    <name type="scientific">Salmonella schwarzengrund (strain CVM19633)</name>
    <dbReference type="NCBI Taxonomy" id="439843"/>
    <lineage>
        <taxon>Bacteria</taxon>
        <taxon>Pseudomonadati</taxon>
        <taxon>Pseudomonadota</taxon>
        <taxon>Gammaproteobacteria</taxon>
        <taxon>Enterobacterales</taxon>
        <taxon>Enterobacteriaceae</taxon>
        <taxon>Salmonella</taxon>
    </lineage>
</organism>
<reference key="1">
    <citation type="journal article" date="2011" name="J. Bacteriol.">
        <title>Comparative genomics of 28 Salmonella enterica isolates: evidence for CRISPR-mediated adaptive sublineage evolution.</title>
        <authorList>
            <person name="Fricke W.F."/>
            <person name="Mammel M.K."/>
            <person name="McDermott P.F."/>
            <person name="Tartera C."/>
            <person name="White D.G."/>
            <person name="Leclerc J.E."/>
            <person name="Ravel J."/>
            <person name="Cebula T.A."/>
        </authorList>
    </citation>
    <scope>NUCLEOTIDE SEQUENCE [LARGE SCALE GENOMIC DNA]</scope>
    <source>
        <strain>CVM19633</strain>
    </source>
</reference>
<sequence length="396" mass="42742">MIISAASDYRAAAQRTLPPFLFHYIDGGAYAEYTLRRNVEDLSQVALRQRVLKNMSDLSLETTLFNETLSMPVALAPVGLCGMYARRGEVQAAAAADAKGIPFTLSTVSVCPIEEVAPTLKRPMWFQLYVLRDRGFMRNALERAKAAGCSTLVFTVDMPTPGARYRDAHSGMSGPNAAMRRYWQAVMHPKWAWDVGLNGRPHDLGNISAYLGKPTGLEDYIGWLANNFDPSISWKDLEWIREFWDGPMVIKGILDPEDARDAVRFGADGIVVSNHGGRQLDGVLSSARALPAIADAVKGDIAILADSGIRNGLDVVRMIALGADTVLLGRAYLYALATAGKAGVANLLDLIEKEMKVAMTLTGAKSISEISGDSLVQELGRSLPAALAPMSKGDAA</sequence>
<evidence type="ECO:0000255" key="1">
    <source>
        <dbReference type="HAMAP-Rule" id="MF_01559"/>
    </source>
</evidence>
<protein>
    <recommendedName>
        <fullName evidence="1">L-lactate dehydrogenase</fullName>
        <ecNumber evidence="1">1.1.-.-</ecNumber>
    </recommendedName>
</protein>